<comment type="function">
    <text evidence="1">Catalyzes the condensation of isopentenyl diphosphate (IPP) with allylic pyrophosphates generating different type of terpenoids.</text>
</comment>
<comment type="cofactor">
    <cofactor evidence="1">
        <name>Mg(2+)</name>
        <dbReference type="ChEBI" id="CHEBI:18420"/>
    </cofactor>
    <text evidence="1">Binds 2 magnesium ions per subunit.</text>
</comment>
<comment type="subunit">
    <text evidence="1">Homodimer.</text>
</comment>
<comment type="similarity">
    <text evidence="1">Belongs to the UPP synthase family.</text>
</comment>
<proteinExistence type="inferred from homology"/>
<accession>Q9L2H4</accession>
<sequence>MAVRGILGRQRREYRTPEPHPSGARPPKLGDLVPEHVAIVMDGNGRWAKERGLPRTEGHKVGAEQVMDVLQGAIEMGVGNISLYAFSTENWKRSPEEVRFLMNFNRDFIRKSRDTLDELGVRVRWAGRMPRLWKSVAKELQVAQEQTKDNDRLTLYFCMNYGGRAEIADAAQALAEDVRAGKLDPAKVNEKTLAKYLYYPDMPDVDLFLRPSGEQRTSNYLLWQSAYAEMVFQDVLWPDFDRRDLWRACLEFASRDRRFGGAIPNEELLAMEGRSTR</sequence>
<gene>
    <name evidence="1" type="primary">uppS1</name>
    <name type="ordered locus">SCO2509</name>
    <name type="ORF">SCC121.12c</name>
</gene>
<reference key="1">
    <citation type="journal article" date="2002" name="Nature">
        <title>Complete genome sequence of the model actinomycete Streptomyces coelicolor A3(2).</title>
        <authorList>
            <person name="Bentley S.D."/>
            <person name="Chater K.F."/>
            <person name="Cerdeno-Tarraga A.-M."/>
            <person name="Challis G.L."/>
            <person name="Thomson N.R."/>
            <person name="James K.D."/>
            <person name="Harris D.E."/>
            <person name="Quail M.A."/>
            <person name="Kieser H."/>
            <person name="Harper D."/>
            <person name="Bateman A."/>
            <person name="Brown S."/>
            <person name="Chandra G."/>
            <person name="Chen C.W."/>
            <person name="Collins M."/>
            <person name="Cronin A."/>
            <person name="Fraser A."/>
            <person name="Goble A."/>
            <person name="Hidalgo J."/>
            <person name="Hornsby T."/>
            <person name="Howarth S."/>
            <person name="Huang C.-H."/>
            <person name="Kieser T."/>
            <person name="Larke L."/>
            <person name="Murphy L.D."/>
            <person name="Oliver K."/>
            <person name="O'Neil S."/>
            <person name="Rabbinowitsch E."/>
            <person name="Rajandream M.A."/>
            <person name="Rutherford K.M."/>
            <person name="Rutter S."/>
            <person name="Seeger K."/>
            <person name="Saunders D."/>
            <person name="Sharp S."/>
            <person name="Squares R."/>
            <person name="Squares S."/>
            <person name="Taylor K."/>
            <person name="Warren T."/>
            <person name="Wietzorrek A."/>
            <person name="Woodward J.R."/>
            <person name="Barrell B.G."/>
            <person name="Parkhill J."/>
            <person name="Hopwood D.A."/>
        </authorList>
    </citation>
    <scope>NUCLEOTIDE SEQUENCE [LARGE SCALE GENOMIC DNA]</scope>
    <source>
        <strain>ATCC BAA-471 / A3(2) / M145</strain>
    </source>
</reference>
<protein>
    <recommendedName>
        <fullName evidence="1">Isoprenyl transferase 1</fullName>
        <ecNumber evidence="1">2.5.1.-</ecNumber>
    </recommendedName>
</protein>
<evidence type="ECO:0000255" key="1">
    <source>
        <dbReference type="HAMAP-Rule" id="MF_01139"/>
    </source>
</evidence>
<evidence type="ECO:0000256" key="2">
    <source>
        <dbReference type="SAM" id="MobiDB-lite"/>
    </source>
</evidence>
<keyword id="KW-0460">Magnesium</keyword>
<keyword id="KW-0479">Metal-binding</keyword>
<keyword id="KW-1185">Reference proteome</keyword>
<keyword id="KW-0808">Transferase</keyword>
<organism>
    <name type="scientific">Streptomyces coelicolor (strain ATCC BAA-471 / A3(2) / M145)</name>
    <dbReference type="NCBI Taxonomy" id="100226"/>
    <lineage>
        <taxon>Bacteria</taxon>
        <taxon>Bacillati</taxon>
        <taxon>Actinomycetota</taxon>
        <taxon>Actinomycetes</taxon>
        <taxon>Kitasatosporales</taxon>
        <taxon>Streptomycetaceae</taxon>
        <taxon>Streptomyces</taxon>
        <taxon>Streptomyces albidoflavus group</taxon>
    </lineage>
</organism>
<name>ISPT1_STRCO</name>
<dbReference type="EC" id="2.5.1.-" evidence="1"/>
<dbReference type="EMBL" id="AL939112">
    <property type="protein sequence ID" value="CAB69730.1"/>
    <property type="molecule type" value="Genomic_DNA"/>
</dbReference>
<dbReference type="RefSeq" id="NP_626749.1">
    <property type="nucleotide sequence ID" value="NC_003888.3"/>
</dbReference>
<dbReference type="RefSeq" id="WP_003976293.1">
    <property type="nucleotide sequence ID" value="NZ_VNID01000001.1"/>
</dbReference>
<dbReference type="SMR" id="Q9L2H4"/>
<dbReference type="FunCoup" id="Q9L2H4">
    <property type="interactions" value="210"/>
</dbReference>
<dbReference type="STRING" id="100226.gene:17760111"/>
<dbReference type="PaxDb" id="100226-SCO2509"/>
<dbReference type="KEGG" id="sco:SCO2509"/>
<dbReference type="PATRIC" id="fig|100226.15.peg.2554"/>
<dbReference type="eggNOG" id="COG0020">
    <property type="taxonomic scope" value="Bacteria"/>
</dbReference>
<dbReference type="HOGENOM" id="CLU_038505_1_2_11"/>
<dbReference type="InParanoid" id="Q9L2H4"/>
<dbReference type="OrthoDB" id="4191603at2"/>
<dbReference type="PhylomeDB" id="Q9L2H4"/>
<dbReference type="Proteomes" id="UP000001973">
    <property type="component" value="Chromosome"/>
</dbReference>
<dbReference type="GO" id="GO:0005829">
    <property type="term" value="C:cytosol"/>
    <property type="evidence" value="ECO:0000318"/>
    <property type="project" value="GO_Central"/>
</dbReference>
<dbReference type="GO" id="GO:0005886">
    <property type="term" value="C:plasma membrane"/>
    <property type="evidence" value="ECO:0000318"/>
    <property type="project" value="GO_Central"/>
</dbReference>
<dbReference type="GO" id="GO:0008834">
    <property type="term" value="F:ditrans,polycis-undecaprenyl-diphosphate synthase [(2E,6E)-farnesyl-diphosphate specific] activity"/>
    <property type="evidence" value="ECO:0000318"/>
    <property type="project" value="GO_Central"/>
</dbReference>
<dbReference type="GO" id="GO:0000287">
    <property type="term" value="F:magnesium ion binding"/>
    <property type="evidence" value="ECO:0000318"/>
    <property type="project" value="GO_Central"/>
</dbReference>
<dbReference type="GO" id="GO:0030145">
    <property type="term" value="F:manganese ion binding"/>
    <property type="evidence" value="ECO:0000318"/>
    <property type="project" value="GO_Central"/>
</dbReference>
<dbReference type="GO" id="GO:0033850">
    <property type="term" value="F:Z-farnesyl diphosphate synthase activity"/>
    <property type="evidence" value="ECO:0000318"/>
    <property type="project" value="GO_Central"/>
</dbReference>
<dbReference type="GO" id="GO:0016094">
    <property type="term" value="P:polyprenol biosynthetic process"/>
    <property type="evidence" value="ECO:0000318"/>
    <property type="project" value="GO_Central"/>
</dbReference>
<dbReference type="CDD" id="cd00475">
    <property type="entry name" value="Cis_IPPS"/>
    <property type="match status" value="1"/>
</dbReference>
<dbReference type="FunFam" id="3.40.1180.10:FF:000004">
    <property type="entry name" value="Isoprenyl transferase"/>
    <property type="match status" value="1"/>
</dbReference>
<dbReference type="Gene3D" id="3.40.1180.10">
    <property type="entry name" value="Decaprenyl diphosphate synthase-like"/>
    <property type="match status" value="1"/>
</dbReference>
<dbReference type="HAMAP" id="MF_01139">
    <property type="entry name" value="ISPT"/>
    <property type="match status" value="1"/>
</dbReference>
<dbReference type="InterPro" id="IPR001441">
    <property type="entry name" value="UPP_synth-like"/>
</dbReference>
<dbReference type="InterPro" id="IPR018520">
    <property type="entry name" value="UPP_synth-like_CS"/>
</dbReference>
<dbReference type="InterPro" id="IPR036424">
    <property type="entry name" value="UPP_synth-like_sf"/>
</dbReference>
<dbReference type="NCBIfam" id="NF011404">
    <property type="entry name" value="PRK14829.1"/>
    <property type="match status" value="1"/>
</dbReference>
<dbReference type="NCBIfam" id="TIGR00055">
    <property type="entry name" value="uppS"/>
    <property type="match status" value="1"/>
</dbReference>
<dbReference type="PANTHER" id="PTHR10291:SF0">
    <property type="entry name" value="DEHYDRODOLICHYL DIPHOSPHATE SYNTHASE 2"/>
    <property type="match status" value="1"/>
</dbReference>
<dbReference type="PANTHER" id="PTHR10291">
    <property type="entry name" value="DEHYDRODOLICHYL DIPHOSPHATE SYNTHASE FAMILY MEMBER"/>
    <property type="match status" value="1"/>
</dbReference>
<dbReference type="Pfam" id="PF01255">
    <property type="entry name" value="Prenyltransf"/>
    <property type="match status" value="1"/>
</dbReference>
<dbReference type="SUPFAM" id="SSF64005">
    <property type="entry name" value="Undecaprenyl diphosphate synthase"/>
    <property type="match status" value="1"/>
</dbReference>
<dbReference type="PROSITE" id="PS01066">
    <property type="entry name" value="UPP_SYNTHASE"/>
    <property type="match status" value="1"/>
</dbReference>
<feature type="chain" id="PRO_0000123685" description="Isoprenyl transferase 1">
    <location>
        <begin position="1"/>
        <end position="277"/>
    </location>
</feature>
<feature type="region of interest" description="Disordered" evidence="2">
    <location>
        <begin position="1"/>
        <end position="30"/>
    </location>
</feature>
<feature type="active site" evidence="1">
    <location>
        <position position="42"/>
    </location>
</feature>
<feature type="active site" description="Proton acceptor" evidence="1">
    <location>
        <position position="90"/>
    </location>
</feature>
<feature type="binding site" evidence="1">
    <location>
        <position position="42"/>
    </location>
    <ligand>
        <name>Mg(2+)</name>
        <dbReference type="ChEBI" id="CHEBI:18420"/>
    </ligand>
</feature>
<feature type="binding site" evidence="1">
    <location>
        <begin position="43"/>
        <end position="46"/>
    </location>
    <ligand>
        <name>substrate</name>
    </ligand>
</feature>
<feature type="binding site" evidence="1">
    <location>
        <position position="47"/>
    </location>
    <ligand>
        <name>substrate</name>
    </ligand>
</feature>
<feature type="binding site" evidence="1">
    <location>
        <position position="55"/>
    </location>
    <ligand>
        <name>substrate</name>
    </ligand>
</feature>
<feature type="binding site" evidence="1">
    <location>
        <position position="59"/>
    </location>
    <ligand>
        <name>substrate</name>
    </ligand>
</feature>
<feature type="binding site" evidence="1">
    <location>
        <begin position="87"/>
        <end position="89"/>
    </location>
    <ligand>
        <name>substrate</name>
    </ligand>
</feature>
<feature type="binding site" evidence="1">
    <location>
        <position position="91"/>
    </location>
    <ligand>
        <name>substrate</name>
    </ligand>
</feature>
<feature type="binding site" evidence="1">
    <location>
        <position position="93"/>
    </location>
    <ligand>
        <name>substrate</name>
    </ligand>
</feature>
<feature type="binding site" evidence="1">
    <location>
        <position position="210"/>
    </location>
    <ligand>
        <name>substrate</name>
    </ligand>
</feature>
<feature type="binding site" evidence="1">
    <location>
        <begin position="216"/>
        <end position="218"/>
    </location>
    <ligand>
        <name>substrate</name>
    </ligand>
</feature>
<feature type="binding site" evidence="1">
    <location>
        <position position="229"/>
    </location>
    <ligand>
        <name>Mg(2+)</name>
        <dbReference type="ChEBI" id="CHEBI:18420"/>
    </ligand>
</feature>